<name>RL1_MYCBT</name>
<protein>
    <recommendedName>
        <fullName evidence="1">Large ribosomal subunit protein uL1</fullName>
    </recommendedName>
    <alternativeName>
        <fullName evidence="2">50S ribosomal protein L1</fullName>
    </alternativeName>
</protein>
<organism>
    <name type="scientific">Mycobacterium bovis (strain BCG / Tokyo 172 / ATCC 35737 / TMC 1019)</name>
    <dbReference type="NCBI Taxonomy" id="561275"/>
    <lineage>
        <taxon>Bacteria</taxon>
        <taxon>Bacillati</taxon>
        <taxon>Actinomycetota</taxon>
        <taxon>Actinomycetes</taxon>
        <taxon>Mycobacteriales</taxon>
        <taxon>Mycobacteriaceae</taxon>
        <taxon>Mycobacterium</taxon>
        <taxon>Mycobacterium tuberculosis complex</taxon>
    </lineage>
</organism>
<dbReference type="EMBL" id="AP010918">
    <property type="protein sequence ID" value="BAH24953.1"/>
    <property type="molecule type" value="Genomic_DNA"/>
</dbReference>
<dbReference type="RefSeq" id="WP_010950427.1">
    <property type="nucleotide sequence ID" value="NZ_CP014566.1"/>
</dbReference>
<dbReference type="SMR" id="C1AKX4"/>
<dbReference type="KEGG" id="mbt:JTY_0660"/>
<dbReference type="HOGENOM" id="CLU_062853_0_0_11"/>
<dbReference type="GO" id="GO:0015934">
    <property type="term" value="C:large ribosomal subunit"/>
    <property type="evidence" value="ECO:0007669"/>
    <property type="project" value="InterPro"/>
</dbReference>
<dbReference type="GO" id="GO:0019843">
    <property type="term" value="F:rRNA binding"/>
    <property type="evidence" value="ECO:0007669"/>
    <property type="project" value="UniProtKB-UniRule"/>
</dbReference>
<dbReference type="GO" id="GO:0003735">
    <property type="term" value="F:structural constituent of ribosome"/>
    <property type="evidence" value="ECO:0007669"/>
    <property type="project" value="InterPro"/>
</dbReference>
<dbReference type="GO" id="GO:0000049">
    <property type="term" value="F:tRNA binding"/>
    <property type="evidence" value="ECO:0007669"/>
    <property type="project" value="UniProtKB-KW"/>
</dbReference>
<dbReference type="GO" id="GO:0006417">
    <property type="term" value="P:regulation of translation"/>
    <property type="evidence" value="ECO:0007669"/>
    <property type="project" value="UniProtKB-KW"/>
</dbReference>
<dbReference type="GO" id="GO:0006412">
    <property type="term" value="P:translation"/>
    <property type="evidence" value="ECO:0007669"/>
    <property type="project" value="UniProtKB-UniRule"/>
</dbReference>
<dbReference type="CDD" id="cd00403">
    <property type="entry name" value="Ribosomal_L1"/>
    <property type="match status" value="1"/>
</dbReference>
<dbReference type="FunFam" id="3.40.50.790:FF:000001">
    <property type="entry name" value="50S ribosomal protein L1"/>
    <property type="match status" value="1"/>
</dbReference>
<dbReference type="Gene3D" id="3.30.190.20">
    <property type="match status" value="1"/>
</dbReference>
<dbReference type="Gene3D" id="3.40.50.790">
    <property type="match status" value="1"/>
</dbReference>
<dbReference type="HAMAP" id="MF_01318_B">
    <property type="entry name" value="Ribosomal_uL1_B"/>
    <property type="match status" value="1"/>
</dbReference>
<dbReference type="InterPro" id="IPR005878">
    <property type="entry name" value="Ribosom_uL1_bac-type"/>
</dbReference>
<dbReference type="InterPro" id="IPR002143">
    <property type="entry name" value="Ribosomal_uL1"/>
</dbReference>
<dbReference type="InterPro" id="IPR023674">
    <property type="entry name" value="Ribosomal_uL1-like"/>
</dbReference>
<dbReference type="InterPro" id="IPR028364">
    <property type="entry name" value="Ribosomal_uL1/biogenesis"/>
</dbReference>
<dbReference type="InterPro" id="IPR016095">
    <property type="entry name" value="Ribosomal_uL1_3-a/b-sand"/>
</dbReference>
<dbReference type="InterPro" id="IPR023673">
    <property type="entry name" value="Ribosomal_uL1_CS"/>
</dbReference>
<dbReference type="NCBIfam" id="TIGR01169">
    <property type="entry name" value="rplA_bact"/>
    <property type="match status" value="1"/>
</dbReference>
<dbReference type="PANTHER" id="PTHR36427">
    <property type="entry name" value="54S RIBOSOMAL PROTEIN L1, MITOCHONDRIAL"/>
    <property type="match status" value="1"/>
</dbReference>
<dbReference type="PANTHER" id="PTHR36427:SF3">
    <property type="entry name" value="LARGE RIBOSOMAL SUBUNIT PROTEIN UL1M"/>
    <property type="match status" value="1"/>
</dbReference>
<dbReference type="Pfam" id="PF00687">
    <property type="entry name" value="Ribosomal_L1"/>
    <property type="match status" value="1"/>
</dbReference>
<dbReference type="PIRSF" id="PIRSF002155">
    <property type="entry name" value="Ribosomal_L1"/>
    <property type="match status" value="1"/>
</dbReference>
<dbReference type="SUPFAM" id="SSF56808">
    <property type="entry name" value="Ribosomal protein L1"/>
    <property type="match status" value="1"/>
</dbReference>
<dbReference type="PROSITE" id="PS01199">
    <property type="entry name" value="RIBOSOMAL_L1"/>
    <property type="match status" value="1"/>
</dbReference>
<comment type="function">
    <text evidence="1">Binds directly to 23S rRNA. The L1 stalk is quite mobile in the ribosome, and is involved in E site tRNA release.</text>
</comment>
<comment type="function">
    <text evidence="1">Protein L1 is also a translational repressor protein, it controls the translation of the L11 operon by binding to its mRNA.</text>
</comment>
<comment type="subunit">
    <text evidence="1">Part of the 50S ribosomal subunit.</text>
</comment>
<comment type="similarity">
    <text evidence="1">Belongs to the universal ribosomal protein uL1 family.</text>
</comment>
<proteinExistence type="inferred from homology"/>
<gene>
    <name evidence="1" type="primary">rplA</name>
    <name type="ordered locus">JTY_0660</name>
</gene>
<keyword id="KW-0678">Repressor</keyword>
<keyword id="KW-0687">Ribonucleoprotein</keyword>
<keyword id="KW-0689">Ribosomal protein</keyword>
<keyword id="KW-0694">RNA-binding</keyword>
<keyword id="KW-0699">rRNA-binding</keyword>
<keyword id="KW-0810">Translation regulation</keyword>
<keyword id="KW-0820">tRNA-binding</keyword>
<evidence type="ECO:0000255" key="1">
    <source>
        <dbReference type="HAMAP-Rule" id="MF_01318"/>
    </source>
</evidence>
<evidence type="ECO:0000305" key="2"/>
<feature type="chain" id="PRO_1000165691" description="Large ribosomal subunit protein uL1">
    <location>
        <begin position="1"/>
        <end position="235"/>
    </location>
</feature>
<accession>C1AKX4</accession>
<sequence>MSKTSKAYRAAAAKVDRTNLYTPLQAAKLAKETSSTKQDATVEVAIRLGVDPRKADQMVRGTVNLPHGTGKTARVAVFAVGEKADAAVAAGADVVGSDDLIERIQGGWLEFDAAIAAPDQMAKVGRIARVLGPRGLMPNPKTGTVTADVAKAVADIKGGKINFRVDKQANLHFVIGKASFDEKLLAENYGAAIDEVLRLKPSSSKGRYLKKITVSTTTGPGIPVDPSITRNFAGE</sequence>
<reference key="1">
    <citation type="journal article" date="2009" name="Vaccine">
        <title>Whole genome sequence analysis of Mycobacterium bovis bacillus Calmette-Guerin (BCG) Tokyo 172: a comparative study of BCG vaccine substrains.</title>
        <authorList>
            <person name="Seki M."/>
            <person name="Honda I."/>
            <person name="Fujita I."/>
            <person name="Yano I."/>
            <person name="Yamamoto S."/>
            <person name="Koyama A."/>
        </authorList>
    </citation>
    <scope>NUCLEOTIDE SEQUENCE [LARGE SCALE GENOMIC DNA]</scope>
    <source>
        <strain>BCG / Tokyo 172 / ATCC 35737 / TMC 1019</strain>
    </source>
</reference>